<sequence length="272" mass="29450">METYAVFGNPIAHSKSPFIHQQFAQQLNIEHPYGRVLAPINDFINTLNAFFRAGGKGANVTVPFKEEAFARADELTERAALAGAVNTLKRLEDGRLLGDNTDGVGLLSDLERLSFIRPGLRILLIGAGGASRGVLLPLLSLDCAVTITNRTVSRAEELAKLFAHTGSIQALGMDELEGHEFDLIINATSSGISGDIPAIPSSLIHPGIYCYDMFYQKGKTPFLAWCEQRGSKRNADGLGMLVAQAAHAFLLWHGVLPDVEPVIKQLQEELSA</sequence>
<gene>
    <name evidence="1" type="primary">aroE</name>
    <name type="ordered locus">SF3313</name>
    <name type="ordered locus">S3537</name>
</gene>
<proteinExistence type="inferred from homology"/>
<keyword id="KW-0028">Amino-acid biosynthesis</keyword>
<keyword id="KW-0057">Aromatic amino acid biosynthesis</keyword>
<keyword id="KW-0521">NADP</keyword>
<keyword id="KW-0560">Oxidoreductase</keyword>
<keyword id="KW-1185">Reference proteome</keyword>
<evidence type="ECO:0000255" key="1">
    <source>
        <dbReference type="HAMAP-Rule" id="MF_00222"/>
    </source>
</evidence>
<dbReference type="EC" id="1.1.1.25" evidence="1"/>
<dbReference type="EMBL" id="AE005674">
    <property type="protein sequence ID" value="AAN44776.2"/>
    <property type="molecule type" value="Genomic_DNA"/>
</dbReference>
<dbReference type="EMBL" id="AE014073">
    <property type="protein sequence ID" value="AAP18585.1"/>
    <property type="molecule type" value="Genomic_DNA"/>
</dbReference>
<dbReference type="RefSeq" id="NP_709069.2">
    <property type="nucleotide sequence ID" value="NC_004337.2"/>
</dbReference>
<dbReference type="RefSeq" id="WP_000451217.1">
    <property type="nucleotide sequence ID" value="NZ_WPGW01000137.1"/>
</dbReference>
<dbReference type="SMR" id="Q83PZ3"/>
<dbReference type="STRING" id="198214.SF3313"/>
<dbReference type="PaxDb" id="198214-SF3313"/>
<dbReference type="GeneID" id="1026495"/>
<dbReference type="KEGG" id="sfl:SF3313"/>
<dbReference type="KEGG" id="sfx:S3537"/>
<dbReference type="PATRIC" id="fig|198214.7.peg.3922"/>
<dbReference type="HOGENOM" id="CLU_044063_2_1_6"/>
<dbReference type="UniPathway" id="UPA00053">
    <property type="reaction ID" value="UER00087"/>
</dbReference>
<dbReference type="Proteomes" id="UP000001006">
    <property type="component" value="Chromosome"/>
</dbReference>
<dbReference type="Proteomes" id="UP000002673">
    <property type="component" value="Chromosome"/>
</dbReference>
<dbReference type="GO" id="GO:0005829">
    <property type="term" value="C:cytosol"/>
    <property type="evidence" value="ECO:0007669"/>
    <property type="project" value="TreeGrafter"/>
</dbReference>
<dbReference type="GO" id="GO:0050661">
    <property type="term" value="F:NADP binding"/>
    <property type="evidence" value="ECO:0007669"/>
    <property type="project" value="InterPro"/>
</dbReference>
<dbReference type="GO" id="GO:0004764">
    <property type="term" value="F:shikimate 3-dehydrogenase (NADP+) activity"/>
    <property type="evidence" value="ECO:0007669"/>
    <property type="project" value="UniProtKB-UniRule"/>
</dbReference>
<dbReference type="GO" id="GO:0008652">
    <property type="term" value="P:amino acid biosynthetic process"/>
    <property type="evidence" value="ECO:0007669"/>
    <property type="project" value="UniProtKB-KW"/>
</dbReference>
<dbReference type="GO" id="GO:0009073">
    <property type="term" value="P:aromatic amino acid family biosynthetic process"/>
    <property type="evidence" value="ECO:0007669"/>
    <property type="project" value="UniProtKB-KW"/>
</dbReference>
<dbReference type="GO" id="GO:0009423">
    <property type="term" value="P:chorismate biosynthetic process"/>
    <property type="evidence" value="ECO:0007669"/>
    <property type="project" value="UniProtKB-UniRule"/>
</dbReference>
<dbReference type="GO" id="GO:0019632">
    <property type="term" value="P:shikimate metabolic process"/>
    <property type="evidence" value="ECO:0007669"/>
    <property type="project" value="InterPro"/>
</dbReference>
<dbReference type="CDD" id="cd01065">
    <property type="entry name" value="NAD_bind_Shikimate_DH"/>
    <property type="match status" value="1"/>
</dbReference>
<dbReference type="FunFam" id="3.40.50.10860:FF:000006">
    <property type="entry name" value="Shikimate dehydrogenase (NADP(+))"/>
    <property type="match status" value="1"/>
</dbReference>
<dbReference type="FunFam" id="3.40.50.720:FF:000104">
    <property type="entry name" value="Shikimate dehydrogenase (NADP(+))"/>
    <property type="match status" value="1"/>
</dbReference>
<dbReference type="Gene3D" id="3.40.50.10860">
    <property type="entry name" value="Leucine Dehydrogenase, chain A, domain 1"/>
    <property type="match status" value="1"/>
</dbReference>
<dbReference type="Gene3D" id="3.40.50.720">
    <property type="entry name" value="NAD(P)-binding Rossmann-like Domain"/>
    <property type="match status" value="1"/>
</dbReference>
<dbReference type="HAMAP" id="MF_00222">
    <property type="entry name" value="Shikimate_DH_AroE"/>
    <property type="match status" value="1"/>
</dbReference>
<dbReference type="InterPro" id="IPR046346">
    <property type="entry name" value="Aminoacid_DH-like_N_sf"/>
</dbReference>
<dbReference type="InterPro" id="IPR036291">
    <property type="entry name" value="NAD(P)-bd_dom_sf"/>
</dbReference>
<dbReference type="InterPro" id="IPR041121">
    <property type="entry name" value="SDH_C"/>
</dbReference>
<dbReference type="InterPro" id="IPR011342">
    <property type="entry name" value="Shikimate_DH"/>
</dbReference>
<dbReference type="InterPro" id="IPR013708">
    <property type="entry name" value="Shikimate_DH-bd_N"/>
</dbReference>
<dbReference type="InterPro" id="IPR022893">
    <property type="entry name" value="Shikimate_DH_fam"/>
</dbReference>
<dbReference type="InterPro" id="IPR006151">
    <property type="entry name" value="Shikm_DH/Glu-tRNA_Rdtase"/>
</dbReference>
<dbReference type="NCBIfam" id="TIGR00507">
    <property type="entry name" value="aroE"/>
    <property type="match status" value="1"/>
</dbReference>
<dbReference type="NCBIfam" id="NF001310">
    <property type="entry name" value="PRK00258.1-2"/>
    <property type="match status" value="1"/>
</dbReference>
<dbReference type="PANTHER" id="PTHR21089:SF1">
    <property type="entry name" value="BIFUNCTIONAL 3-DEHYDROQUINATE DEHYDRATASE_SHIKIMATE DEHYDROGENASE, CHLOROPLASTIC"/>
    <property type="match status" value="1"/>
</dbReference>
<dbReference type="PANTHER" id="PTHR21089">
    <property type="entry name" value="SHIKIMATE DEHYDROGENASE"/>
    <property type="match status" value="1"/>
</dbReference>
<dbReference type="Pfam" id="PF18317">
    <property type="entry name" value="SDH_C"/>
    <property type="match status" value="1"/>
</dbReference>
<dbReference type="Pfam" id="PF01488">
    <property type="entry name" value="Shikimate_DH"/>
    <property type="match status" value="1"/>
</dbReference>
<dbReference type="Pfam" id="PF08501">
    <property type="entry name" value="Shikimate_dh_N"/>
    <property type="match status" value="1"/>
</dbReference>
<dbReference type="SUPFAM" id="SSF53223">
    <property type="entry name" value="Aminoacid dehydrogenase-like, N-terminal domain"/>
    <property type="match status" value="1"/>
</dbReference>
<dbReference type="SUPFAM" id="SSF51735">
    <property type="entry name" value="NAD(P)-binding Rossmann-fold domains"/>
    <property type="match status" value="1"/>
</dbReference>
<comment type="function">
    <text evidence="1">Involved in the biosynthesis of the chorismate, which leads to the biosynthesis of aromatic amino acids. Catalyzes the reversible NADPH linked reduction of 3-dehydroshikimate (DHSA) to yield shikimate (SA).</text>
</comment>
<comment type="catalytic activity">
    <reaction evidence="1">
        <text>shikimate + NADP(+) = 3-dehydroshikimate + NADPH + H(+)</text>
        <dbReference type="Rhea" id="RHEA:17737"/>
        <dbReference type="ChEBI" id="CHEBI:15378"/>
        <dbReference type="ChEBI" id="CHEBI:16630"/>
        <dbReference type="ChEBI" id="CHEBI:36208"/>
        <dbReference type="ChEBI" id="CHEBI:57783"/>
        <dbReference type="ChEBI" id="CHEBI:58349"/>
        <dbReference type="EC" id="1.1.1.25"/>
    </reaction>
</comment>
<comment type="pathway">
    <text evidence="1">Metabolic intermediate biosynthesis; chorismate biosynthesis; chorismate from D-erythrose 4-phosphate and phosphoenolpyruvate: step 4/7.</text>
</comment>
<comment type="subunit">
    <text evidence="1">Homodimer.</text>
</comment>
<comment type="similarity">
    <text evidence="1">Belongs to the shikimate dehydrogenase family.</text>
</comment>
<organism>
    <name type="scientific">Shigella flexneri</name>
    <dbReference type="NCBI Taxonomy" id="623"/>
    <lineage>
        <taxon>Bacteria</taxon>
        <taxon>Pseudomonadati</taxon>
        <taxon>Pseudomonadota</taxon>
        <taxon>Gammaproteobacteria</taxon>
        <taxon>Enterobacterales</taxon>
        <taxon>Enterobacteriaceae</taxon>
        <taxon>Shigella</taxon>
    </lineage>
</organism>
<name>AROE_SHIFL</name>
<reference key="1">
    <citation type="journal article" date="2002" name="Nucleic Acids Res.">
        <title>Genome sequence of Shigella flexneri 2a: insights into pathogenicity through comparison with genomes of Escherichia coli K12 and O157.</title>
        <authorList>
            <person name="Jin Q."/>
            <person name="Yuan Z."/>
            <person name="Xu J."/>
            <person name="Wang Y."/>
            <person name="Shen Y."/>
            <person name="Lu W."/>
            <person name="Wang J."/>
            <person name="Liu H."/>
            <person name="Yang J."/>
            <person name="Yang F."/>
            <person name="Zhang X."/>
            <person name="Zhang J."/>
            <person name="Yang G."/>
            <person name="Wu H."/>
            <person name="Qu D."/>
            <person name="Dong J."/>
            <person name="Sun L."/>
            <person name="Xue Y."/>
            <person name="Zhao A."/>
            <person name="Gao Y."/>
            <person name="Zhu J."/>
            <person name="Kan B."/>
            <person name="Ding K."/>
            <person name="Chen S."/>
            <person name="Cheng H."/>
            <person name="Yao Z."/>
            <person name="He B."/>
            <person name="Chen R."/>
            <person name="Ma D."/>
            <person name="Qiang B."/>
            <person name="Wen Y."/>
            <person name="Hou Y."/>
            <person name="Yu J."/>
        </authorList>
    </citation>
    <scope>NUCLEOTIDE SEQUENCE [LARGE SCALE GENOMIC DNA]</scope>
    <source>
        <strain>301 / Serotype 2a</strain>
    </source>
</reference>
<reference key="2">
    <citation type="journal article" date="2003" name="Infect. Immun.">
        <title>Complete genome sequence and comparative genomics of Shigella flexneri serotype 2a strain 2457T.</title>
        <authorList>
            <person name="Wei J."/>
            <person name="Goldberg M.B."/>
            <person name="Burland V."/>
            <person name="Venkatesan M.M."/>
            <person name="Deng W."/>
            <person name="Fournier G."/>
            <person name="Mayhew G.F."/>
            <person name="Plunkett G. III"/>
            <person name="Rose D.J."/>
            <person name="Darling A."/>
            <person name="Mau B."/>
            <person name="Perna N.T."/>
            <person name="Payne S.M."/>
            <person name="Runyen-Janecky L.J."/>
            <person name="Zhou S."/>
            <person name="Schwartz D.C."/>
            <person name="Blattner F.R."/>
        </authorList>
    </citation>
    <scope>NUCLEOTIDE SEQUENCE [LARGE SCALE GENOMIC DNA]</scope>
    <source>
        <strain>ATCC 700930 / 2457T / Serotype 2a</strain>
    </source>
</reference>
<feature type="chain" id="PRO_1000021334" description="Shikimate dehydrogenase (NADP(+))">
    <location>
        <begin position="1"/>
        <end position="272"/>
    </location>
</feature>
<feature type="active site" description="Proton acceptor" evidence="1">
    <location>
        <position position="65"/>
    </location>
</feature>
<feature type="binding site" evidence="1">
    <location>
        <begin position="14"/>
        <end position="16"/>
    </location>
    <ligand>
        <name>shikimate</name>
        <dbReference type="ChEBI" id="CHEBI:36208"/>
    </ligand>
</feature>
<feature type="binding site" evidence="1">
    <location>
        <position position="61"/>
    </location>
    <ligand>
        <name>shikimate</name>
        <dbReference type="ChEBI" id="CHEBI:36208"/>
    </ligand>
</feature>
<feature type="binding site" evidence="1">
    <location>
        <position position="77"/>
    </location>
    <ligand>
        <name>NADP(+)</name>
        <dbReference type="ChEBI" id="CHEBI:58349"/>
    </ligand>
</feature>
<feature type="binding site" evidence="1">
    <location>
        <position position="86"/>
    </location>
    <ligand>
        <name>shikimate</name>
        <dbReference type="ChEBI" id="CHEBI:36208"/>
    </ligand>
</feature>
<feature type="binding site" evidence="1">
    <location>
        <position position="102"/>
    </location>
    <ligand>
        <name>shikimate</name>
        <dbReference type="ChEBI" id="CHEBI:36208"/>
    </ligand>
</feature>
<feature type="binding site" evidence="1">
    <location>
        <begin position="126"/>
        <end position="130"/>
    </location>
    <ligand>
        <name>NADP(+)</name>
        <dbReference type="ChEBI" id="CHEBI:58349"/>
    </ligand>
</feature>
<feature type="binding site" evidence="1">
    <location>
        <begin position="149"/>
        <end position="154"/>
    </location>
    <ligand>
        <name>NADP(+)</name>
        <dbReference type="ChEBI" id="CHEBI:58349"/>
    </ligand>
</feature>
<feature type="binding site" evidence="1">
    <location>
        <position position="213"/>
    </location>
    <ligand>
        <name>NADP(+)</name>
        <dbReference type="ChEBI" id="CHEBI:58349"/>
    </ligand>
</feature>
<feature type="binding site" evidence="1">
    <location>
        <position position="215"/>
    </location>
    <ligand>
        <name>shikimate</name>
        <dbReference type="ChEBI" id="CHEBI:36208"/>
    </ligand>
</feature>
<feature type="binding site" evidence="1">
    <location>
        <position position="237"/>
    </location>
    <ligand>
        <name>NADP(+)</name>
        <dbReference type="ChEBI" id="CHEBI:58349"/>
    </ligand>
</feature>
<protein>
    <recommendedName>
        <fullName evidence="1">Shikimate dehydrogenase (NADP(+))</fullName>
        <shortName evidence="1">SDH</shortName>
        <ecNumber evidence="1">1.1.1.25</ecNumber>
    </recommendedName>
</protein>
<accession>Q83PZ3</accession>
<accession>Q7UBD7</accession>